<comment type="function">
    <text evidence="1">This protein is involved in the repair of mismatches in DNA. It is required for dam-dependent methyl-directed DNA mismatch repair. May act as a 'molecular matchmaker', a protein that promotes the formation of a stable complex between two or more DNA-binding proteins in an ATP-dependent manner without itself being part of a final effector complex.</text>
</comment>
<comment type="similarity">
    <text evidence="1">Belongs to the DNA mismatch repair MutL/HexB family.</text>
</comment>
<evidence type="ECO:0000255" key="1">
    <source>
        <dbReference type="HAMAP-Rule" id="MF_00149"/>
    </source>
</evidence>
<evidence type="ECO:0000256" key="2">
    <source>
        <dbReference type="SAM" id="MobiDB-lite"/>
    </source>
</evidence>
<keyword id="KW-0227">DNA damage</keyword>
<keyword id="KW-0234">DNA repair</keyword>
<dbReference type="EMBL" id="CP000685">
    <property type="protein sequence ID" value="ABQ03248.1"/>
    <property type="molecule type" value="Genomic_DNA"/>
</dbReference>
<dbReference type="RefSeq" id="WP_012022319.1">
    <property type="nucleotide sequence ID" value="NC_009441.1"/>
</dbReference>
<dbReference type="SMR" id="A5FNH2"/>
<dbReference type="STRING" id="376686.Fjoh_0211"/>
<dbReference type="KEGG" id="fjo:Fjoh_0211"/>
<dbReference type="eggNOG" id="COG0323">
    <property type="taxonomic scope" value="Bacteria"/>
</dbReference>
<dbReference type="HOGENOM" id="CLU_004131_4_1_10"/>
<dbReference type="OrthoDB" id="9763467at2"/>
<dbReference type="Proteomes" id="UP000006694">
    <property type="component" value="Chromosome"/>
</dbReference>
<dbReference type="GO" id="GO:0032300">
    <property type="term" value="C:mismatch repair complex"/>
    <property type="evidence" value="ECO:0007669"/>
    <property type="project" value="InterPro"/>
</dbReference>
<dbReference type="GO" id="GO:0005524">
    <property type="term" value="F:ATP binding"/>
    <property type="evidence" value="ECO:0007669"/>
    <property type="project" value="InterPro"/>
</dbReference>
<dbReference type="GO" id="GO:0016887">
    <property type="term" value="F:ATP hydrolysis activity"/>
    <property type="evidence" value="ECO:0007669"/>
    <property type="project" value="InterPro"/>
</dbReference>
<dbReference type="GO" id="GO:0140664">
    <property type="term" value="F:ATP-dependent DNA damage sensor activity"/>
    <property type="evidence" value="ECO:0007669"/>
    <property type="project" value="InterPro"/>
</dbReference>
<dbReference type="GO" id="GO:0030983">
    <property type="term" value="F:mismatched DNA binding"/>
    <property type="evidence" value="ECO:0007669"/>
    <property type="project" value="InterPro"/>
</dbReference>
<dbReference type="GO" id="GO:0006298">
    <property type="term" value="P:mismatch repair"/>
    <property type="evidence" value="ECO:0007669"/>
    <property type="project" value="UniProtKB-UniRule"/>
</dbReference>
<dbReference type="CDD" id="cd16926">
    <property type="entry name" value="HATPase_MutL-MLH-PMS-like"/>
    <property type="match status" value="1"/>
</dbReference>
<dbReference type="CDD" id="cd00782">
    <property type="entry name" value="MutL_Trans"/>
    <property type="match status" value="1"/>
</dbReference>
<dbReference type="FunFam" id="3.30.565.10:FF:000003">
    <property type="entry name" value="DNA mismatch repair endonuclease MutL"/>
    <property type="match status" value="1"/>
</dbReference>
<dbReference type="Gene3D" id="3.30.230.10">
    <property type="match status" value="1"/>
</dbReference>
<dbReference type="Gene3D" id="3.30.565.10">
    <property type="entry name" value="Histidine kinase-like ATPase, C-terminal domain"/>
    <property type="match status" value="1"/>
</dbReference>
<dbReference type="Gene3D" id="3.30.1540.20">
    <property type="entry name" value="MutL, C-terminal domain, dimerisation subdomain"/>
    <property type="match status" value="1"/>
</dbReference>
<dbReference type="Gene3D" id="3.30.1370.100">
    <property type="entry name" value="MutL, C-terminal domain, regulatory subdomain"/>
    <property type="match status" value="1"/>
</dbReference>
<dbReference type="HAMAP" id="MF_00149">
    <property type="entry name" value="DNA_mis_repair"/>
    <property type="match status" value="1"/>
</dbReference>
<dbReference type="InterPro" id="IPR014762">
    <property type="entry name" value="DNA_mismatch_repair_CS"/>
</dbReference>
<dbReference type="InterPro" id="IPR020667">
    <property type="entry name" value="DNA_mismatch_repair_MutL"/>
</dbReference>
<dbReference type="InterPro" id="IPR013507">
    <property type="entry name" value="DNA_mismatch_S5_2-like"/>
</dbReference>
<dbReference type="InterPro" id="IPR036890">
    <property type="entry name" value="HATPase_C_sf"/>
</dbReference>
<dbReference type="InterPro" id="IPR002099">
    <property type="entry name" value="MutL/Mlh/PMS"/>
</dbReference>
<dbReference type="InterPro" id="IPR038973">
    <property type="entry name" value="MutL/Mlh/Pms-like"/>
</dbReference>
<dbReference type="InterPro" id="IPR014790">
    <property type="entry name" value="MutL_C"/>
</dbReference>
<dbReference type="InterPro" id="IPR042120">
    <property type="entry name" value="MutL_C_dimsub"/>
</dbReference>
<dbReference type="InterPro" id="IPR042121">
    <property type="entry name" value="MutL_C_regsub"/>
</dbReference>
<dbReference type="InterPro" id="IPR037198">
    <property type="entry name" value="MutL_C_sf"/>
</dbReference>
<dbReference type="InterPro" id="IPR020568">
    <property type="entry name" value="Ribosomal_Su5_D2-typ_SF"/>
</dbReference>
<dbReference type="InterPro" id="IPR014721">
    <property type="entry name" value="Ribsml_uS5_D2-typ_fold_subgr"/>
</dbReference>
<dbReference type="NCBIfam" id="TIGR00585">
    <property type="entry name" value="mutl"/>
    <property type="match status" value="1"/>
</dbReference>
<dbReference type="PANTHER" id="PTHR10073">
    <property type="entry name" value="DNA MISMATCH REPAIR PROTEIN MLH, PMS, MUTL"/>
    <property type="match status" value="1"/>
</dbReference>
<dbReference type="PANTHER" id="PTHR10073:SF12">
    <property type="entry name" value="DNA MISMATCH REPAIR PROTEIN MLH1"/>
    <property type="match status" value="1"/>
</dbReference>
<dbReference type="Pfam" id="PF01119">
    <property type="entry name" value="DNA_mis_repair"/>
    <property type="match status" value="1"/>
</dbReference>
<dbReference type="Pfam" id="PF13589">
    <property type="entry name" value="HATPase_c_3"/>
    <property type="match status" value="1"/>
</dbReference>
<dbReference type="Pfam" id="PF08676">
    <property type="entry name" value="MutL_C"/>
    <property type="match status" value="1"/>
</dbReference>
<dbReference type="SMART" id="SM01340">
    <property type="entry name" value="DNA_mis_repair"/>
    <property type="match status" value="1"/>
</dbReference>
<dbReference type="SMART" id="SM00853">
    <property type="entry name" value="MutL_C"/>
    <property type="match status" value="1"/>
</dbReference>
<dbReference type="SUPFAM" id="SSF55874">
    <property type="entry name" value="ATPase domain of HSP90 chaperone/DNA topoisomerase II/histidine kinase"/>
    <property type="match status" value="1"/>
</dbReference>
<dbReference type="SUPFAM" id="SSF118116">
    <property type="entry name" value="DNA mismatch repair protein MutL"/>
    <property type="match status" value="1"/>
</dbReference>
<dbReference type="SUPFAM" id="SSF54211">
    <property type="entry name" value="Ribosomal protein S5 domain 2-like"/>
    <property type="match status" value="1"/>
</dbReference>
<dbReference type="PROSITE" id="PS00058">
    <property type="entry name" value="DNA_MISMATCH_REPAIR_1"/>
    <property type="match status" value="1"/>
</dbReference>
<protein>
    <recommendedName>
        <fullName evidence="1">DNA mismatch repair protein MutL</fullName>
    </recommendedName>
</protein>
<accession>A5FNH2</accession>
<sequence length="644" mass="71506">MSSIIQLLPDHVANQIAAGEVVQRPASVVKELLENAVDAKATDIKLIIKDAGKSLVQVIDNGVGMTVTDARLCFARHATSKIRQAEDLFSLGTKGFRGEALASIAAIAHMEMKTKQEQDELGTHIVIEGSKFVSQEVAVLPKGTSFAVKNLFFNIPARRNFLKSDTVEFRHVMDEFQRVALAHPNIHFSFYHNGSELYNLPAAGYRQRIVGIMSGKTNEKLVPVNEDTEIISIQGFVCKPEFAKKNRGEQFFFVNDRFIKSGYLHHAVMAAYDGLLKDGSQPSYFLYLQVPPNTIDINIHPTKTEIKFDDEQALYAILRASIKHSLGQFNVAPVLDFDRDSNLDTPYHYKDVEAEVPTIQVDGTFNPFTDDKTNQHYTKAGSGSGSGYSSGSSSSSGSGSGSSYSGYSKRVEPTVSWESLYVGLDTENPETIESSPFIFENEEVTSSLFNDDEVEQASQKTYQIHKKYIVSPIKSGMVIVDQHRAHQRILYEQFLLNMTVNQASSQQLLFPLDLFYSSSEMKLIEELKPSLETTGFVFEEAQTDHVVISGIPVNITESEVSLVIEQLLSDLQDGIPASSYSQNDTIAKSMAKSLAVKTGSYLTEKEQDNLVNGLFACKDPNISPFQKPTFITMRVEDIDKKFAL</sequence>
<proteinExistence type="inferred from homology"/>
<reference key="1">
    <citation type="journal article" date="2009" name="Appl. Environ. Microbiol.">
        <title>Novel features of the polysaccharide-digesting gliding bacterium Flavobacterium johnsoniae as revealed by genome sequence analysis.</title>
        <authorList>
            <person name="McBride M.J."/>
            <person name="Xie G."/>
            <person name="Martens E.C."/>
            <person name="Lapidus A."/>
            <person name="Henrissat B."/>
            <person name="Rhodes R.G."/>
            <person name="Goltsman E."/>
            <person name="Wang W."/>
            <person name="Xu J."/>
            <person name="Hunnicutt D.W."/>
            <person name="Staroscik A.M."/>
            <person name="Hoover T.R."/>
            <person name="Cheng Y.Q."/>
            <person name="Stein J.L."/>
        </authorList>
    </citation>
    <scope>NUCLEOTIDE SEQUENCE [LARGE SCALE GENOMIC DNA]</scope>
    <source>
        <strain>ATCC 17061 / DSM 2064 / JCM 8514 / BCRC 14874 / CCUG 350202 / NBRC 14942 / NCIMB 11054 / UW101</strain>
    </source>
</reference>
<name>MUTL_FLAJ1</name>
<feature type="chain" id="PRO_1000076697" description="DNA mismatch repair protein MutL">
    <location>
        <begin position="1"/>
        <end position="644"/>
    </location>
</feature>
<feature type="region of interest" description="Disordered" evidence="2">
    <location>
        <begin position="363"/>
        <end position="405"/>
    </location>
</feature>
<feature type="compositionally biased region" description="Low complexity" evidence="2">
    <location>
        <begin position="389"/>
        <end position="405"/>
    </location>
</feature>
<gene>
    <name evidence="1" type="primary">mutL</name>
    <name type="ordered locus">Fjoh_0211</name>
</gene>
<organism>
    <name type="scientific">Flavobacterium johnsoniae (strain ATCC 17061 / DSM 2064 / JCM 8514 / BCRC 14874 / CCUG 350202 / NBRC 14942 / NCIMB 11054 / UW101)</name>
    <name type="common">Cytophaga johnsonae</name>
    <dbReference type="NCBI Taxonomy" id="376686"/>
    <lineage>
        <taxon>Bacteria</taxon>
        <taxon>Pseudomonadati</taxon>
        <taxon>Bacteroidota</taxon>
        <taxon>Flavobacteriia</taxon>
        <taxon>Flavobacteriales</taxon>
        <taxon>Flavobacteriaceae</taxon>
        <taxon>Flavobacterium</taxon>
    </lineage>
</organism>